<sequence>MKRKTSPILSWLLTIGFAFIAFIAVFPLLNLILASFRPSTELMRNGITLIFDPSTLTLDNFIYIFTEAGLYWTWFGNSVWISIVIVVLSLLFSSMVGYALAVYDFKGRNFFFLLVLIILMIPFEILMLPLFQLMIKLQLVNTYTAVILPAIVAPIAVFFFRQYALGLPKELMDAARIDGCTEYGIFFKIMLPLMGPSLAAMAILQGLNSWNNFLWPLVVLRSNDMFTLPIGLATLLTPYGNNYDILLAGSVMTIVPIVILFIFFQRYFIAGLTVGGVKG</sequence>
<proteinExistence type="inferred from homology"/>
<organism>
    <name type="scientific">Halalkalibacterium halodurans (strain ATCC BAA-125 / DSM 18197 / FERM 7344 / JCM 9153 / C-125)</name>
    <name type="common">Bacillus halodurans</name>
    <dbReference type="NCBI Taxonomy" id="272558"/>
    <lineage>
        <taxon>Bacteria</taxon>
        <taxon>Bacillati</taxon>
        <taxon>Bacillota</taxon>
        <taxon>Bacilli</taxon>
        <taxon>Bacillales</taxon>
        <taxon>Bacillaceae</taxon>
        <taxon>Halalkalibacterium (ex Joshi et al. 2022)</taxon>
    </lineage>
</organism>
<comment type="function">
    <text evidence="1">Part of the ABC transporter complex AraNPQ involved in the uptake of arabinooligosaccharides (By similarity). Responsible for the translocation of the substrate across the membrane (By similarity).</text>
</comment>
<comment type="subunit">
    <text evidence="1">The complex is composed of two ATP-binding proteins (MsmX), two transmembrane proteins (AraP and AraQ) and a solute-binding protein (AraN).</text>
</comment>
<comment type="subcellular location">
    <subcellularLocation>
        <location evidence="3">Cell membrane</location>
        <topology evidence="2">Multi-pass membrane protein</topology>
    </subcellularLocation>
</comment>
<comment type="similarity">
    <text evidence="3">Belongs to the binding-protein-dependent transport system permease family. MalFG subfamily.</text>
</comment>
<keyword id="KW-1003">Cell membrane</keyword>
<keyword id="KW-0472">Membrane</keyword>
<keyword id="KW-1185">Reference proteome</keyword>
<keyword id="KW-0762">Sugar transport</keyword>
<keyword id="KW-0812">Transmembrane</keyword>
<keyword id="KW-1133">Transmembrane helix</keyword>
<keyword id="KW-0813">Transport</keyword>
<gene>
    <name type="primary">araQ</name>
    <name type="ordered locus">BH0903</name>
</gene>
<protein>
    <recommendedName>
        <fullName evidence="1">Arabinooligosaccharides transport system permease protein AraQ</fullName>
    </recommendedName>
</protein>
<dbReference type="EMBL" id="BA000004">
    <property type="protein sequence ID" value="BAB04622.1"/>
    <property type="molecule type" value="Genomic_DNA"/>
</dbReference>
<dbReference type="PIR" id="G83762">
    <property type="entry name" value="G83762"/>
</dbReference>
<dbReference type="RefSeq" id="WP_010897076.1">
    <property type="nucleotide sequence ID" value="NC_002570.2"/>
</dbReference>
<dbReference type="SMR" id="Q9KEE9"/>
<dbReference type="STRING" id="272558.gene:10726777"/>
<dbReference type="GeneID" id="87596447"/>
<dbReference type="KEGG" id="bha:BH0903"/>
<dbReference type="eggNOG" id="COG0395">
    <property type="taxonomic scope" value="Bacteria"/>
</dbReference>
<dbReference type="HOGENOM" id="CLU_016047_1_1_9"/>
<dbReference type="OrthoDB" id="9771544at2"/>
<dbReference type="Proteomes" id="UP000001258">
    <property type="component" value="Chromosome"/>
</dbReference>
<dbReference type="GO" id="GO:0005886">
    <property type="term" value="C:plasma membrane"/>
    <property type="evidence" value="ECO:0007669"/>
    <property type="project" value="UniProtKB-SubCell"/>
</dbReference>
<dbReference type="GO" id="GO:0055085">
    <property type="term" value="P:transmembrane transport"/>
    <property type="evidence" value="ECO:0007669"/>
    <property type="project" value="InterPro"/>
</dbReference>
<dbReference type="CDD" id="cd06261">
    <property type="entry name" value="TM_PBP2"/>
    <property type="match status" value="1"/>
</dbReference>
<dbReference type="Gene3D" id="1.10.3720.10">
    <property type="entry name" value="MetI-like"/>
    <property type="match status" value="1"/>
</dbReference>
<dbReference type="InterPro" id="IPR000515">
    <property type="entry name" value="MetI-like"/>
</dbReference>
<dbReference type="InterPro" id="IPR035906">
    <property type="entry name" value="MetI-like_sf"/>
</dbReference>
<dbReference type="PANTHER" id="PTHR43744">
    <property type="entry name" value="ABC TRANSPORTER PERMEASE PROTEIN MG189-RELATED-RELATED"/>
    <property type="match status" value="1"/>
</dbReference>
<dbReference type="PANTHER" id="PTHR43744:SF2">
    <property type="entry name" value="ARABINOOLIGOSACCHARIDES TRANSPORT SYSTEM PERMEASE PROTEIN ARAQ"/>
    <property type="match status" value="1"/>
</dbReference>
<dbReference type="Pfam" id="PF00528">
    <property type="entry name" value="BPD_transp_1"/>
    <property type="match status" value="1"/>
</dbReference>
<dbReference type="SUPFAM" id="SSF161098">
    <property type="entry name" value="MetI-like"/>
    <property type="match status" value="1"/>
</dbReference>
<dbReference type="PROSITE" id="PS50928">
    <property type="entry name" value="ABC_TM1"/>
    <property type="match status" value="1"/>
</dbReference>
<feature type="chain" id="PRO_0000059955" description="Arabinooligosaccharides transport system permease protein AraQ">
    <location>
        <begin position="1"/>
        <end position="279"/>
    </location>
</feature>
<feature type="transmembrane region" description="Helical" evidence="2">
    <location>
        <begin position="8"/>
        <end position="28"/>
    </location>
</feature>
<feature type="transmembrane region" description="Helical" evidence="2">
    <location>
        <begin position="79"/>
        <end position="99"/>
    </location>
</feature>
<feature type="transmembrane region" description="Helical" evidence="2">
    <location>
        <begin position="110"/>
        <end position="130"/>
    </location>
</feature>
<feature type="transmembrane region" description="Helical" evidence="2">
    <location>
        <begin position="140"/>
        <end position="160"/>
    </location>
</feature>
<feature type="transmembrane region" description="Helical" evidence="2">
    <location>
        <begin position="184"/>
        <end position="204"/>
    </location>
</feature>
<feature type="transmembrane region" description="Helical" evidence="2">
    <location>
        <begin position="245"/>
        <end position="265"/>
    </location>
</feature>
<feature type="domain" description="ABC transmembrane type-1" evidence="2">
    <location>
        <begin position="75"/>
        <end position="264"/>
    </location>
</feature>
<name>ARAQ_HALH5</name>
<reference key="1">
    <citation type="journal article" date="2000" name="Nucleic Acids Res.">
        <title>Complete genome sequence of the alkaliphilic bacterium Bacillus halodurans and genomic sequence comparison with Bacillus subtilis.</title>
        <authorList>
            <person name="Takami H."/>
            <person name="Nakasone K."/>
            <person name="Takaki Y."/>
            <person name="Maeno G."/>
            <person name="Sasaki R."/>
            <person name="Masui N."/>
            <person name="Fuji F."/>
            <person name="Hirama C."/>
            <person name="Nakamura Y."/>
            <person name="Ogasawara N."/>
            <person name="Kuhara S."/>
            <person name="Horikoshi K."/>
        </authorList>
    </citation>
    <scope>NUCLEOTIDE SEQUENCE [LARGE SCALE GENOMIC DNA]</scope>
    <source>
        <strain>ATCC BAA-125 / DSM 18197 / FERM 7344 / JCM 9153 / C-125</strain>
    </source>
</reference>
<accession>Q9KEE9</accession>
<evidence type="ECO:0000250" key="1">
    <source>
        <dbReference type="UniProtKB" id="P94530"/>
    </source>
</evidence>
<evidence type="ECO:0000255" key="2">
    <source>
        <dbReference type="PROSITE-ProRule" id="PRU00441"/>
    </source>
</evidence>
<evidence type="ECO:0000305" key="3"/>